<organism>
    <name type="scientific">Chlorobium luteolum (strain DSM 273 / BCRC 81028 / 2530)</name>
    <name type="common">Pelodictyon luteolum</name>
    <dbReference type="NCBI Taxonomy" id="319225"/>
    <lineage>
        <taxon>Bacteria</taxon>
        <taxon>Pseudomonadati</taxon>
        <taxon>Chlorobiota</taxon>
        <taxon>Chlorobiia</taxon>
        <taxon>Chlorobiales</taxon>
        <taxon>Chlorobiaceae</taxon>
        <taxon>Chlorobium/Pelodictyon group</taxon>
        <taxon>Pelodictyon</taxon>
    </lineage>
</organism>
<reference key="1">
    <citation type="submission" date="2005-08" db="EMBL/GenBank/DDBJ databases">
        <title>Complete sequence of Pelodictyon luteolum DSM 273.</title>
        <authorList>
            <consortium name="US DOE Joint Genome Institute"/>
            <person name="Copeland A."/>
            <person name="Lucas S."/>
            <person name="Lapidus A."/>
            <person name="Barry K."/>
            <person name="Detter J.C."/>
            <person name="Glavina T."/>
            <person name="Hammon N."/>
            <person name="Israni S."/>
            <person name="Pitluck S."/>
            <person name="Bryant D."/>
            <person name="Schmutz J."/>
            <person name="Larimer F."/>
            <person name="Land M."/>
            <person name="Kyrpides N."/>
            <person name="Ivanova N."/>
            <person name="Richardson P."/>
        </authorList>
    </citation>
    <scope>NUCLEOTIDE SEQUENCE [LARGE SCALE GENOMIC DNA]</scope>
    <source>
        <strain>DSM 273 / BCRC 81028 / 2530</strain>
    </source>
</reference>
<gene>
    <name evidence="2" type="primary">atpF1</name>
    <name type="ordered locus">Plut_1069</name>
</gene>
<dbReference type="EMBL" id="CP000096">
    <property type="protein sequence ID" value="ABB23931.1"/>
    <property type="molecule type" value="Genomic_DNA"/>
</dbReference>
<dbReference type="SMR" id="Q3B400"/>
<dbReference type="STRING" id="319225.Plut_1069"/>
<dbReference type="KEGG" id="plt:Plut_1069"/>
<dbReference type="eggNOG" id="COG0711">
    <property type="taxonomic scope" value="Bacteria"/>
</dbReference>
<dbReference type="HOGENOM" id="CLU_070737_0_0_10"/>
<dbReference type="OrthoDB" id="282095at2"/>
<dbReference type="Proteomes" id="UP000002709">
    <property type="component" value="Chromosome"/>
</dbReference>
<dbReference type="GO" id="GO:0005886">
    <property type="term" value="C:plasma membrane"/>
    <property type="evidence" value="ECO:0007669"/>
    <property type="project" value="UniProtKB-SubCell"/>
</dbReference>
<dbReference type="GO" id="GO:0045259">
    <property type="term" value="C:proton-transporting ATP synthase complex"/>
    <property type="evidence" value="ECO:0007669"/>
    <property type="project" value="UniProtKB-KW"/>
</dbReference>
<dbReference type="GO" id="GO:0046933">
    <property type="term" value="F:proton-transporting ATP synthase activity, rotational mechanism"/>
    <property type="evidence" value="ECO:0007669"/>
    <property type="project" value="UniProtKB-UniRule"/>
</dbReference>
<dbReference type="GO" id="GO:0046961">
    <property type="term" value="F:proton-transporting ATPase activity, rotational mechanism"/>
    <property type="evidence" value="ECO:0007669"/>
    <property type="project" value="TreeGrafter"/>
</dbReference>
<dbReference type="CDD" id="cd06503">
    <property type="entry name" value="ATP-synt_Fo_b"/>
    <property type="match status" value="1"/>
</dbReference>
<dbReference type="HAMAP" id="MF_01398">
    <property type="entry name" value="ATP_synth_b_bprime"/>
    <property type="match status" value="1"/>
</dbReference>
<dbReference type="InterPro" id="IPR017707">
    <property type="entry name" value="Alt_ATP_synth_F0_bsu"/>
</dbReference>
<dbReference type="InterPro" id="IPR002146">
    <property type="entry name" value="ATP_synth_b/b'su_bac/chlpt"/>
</dbReference>
<dbReference type="InterPro" id="IPR005864">
    <property type="entry name" value="ATP_synth_F0_bsu_bac"/>
</dbReference>
<dbReference type="InterPro" id="IPR050059">
    <property type="entry name" value="ATP_synthase_B_chain"/>
</dbReference>
<dbReference type="InterPro" id="IPR000711">
    <property type="entry name" value="ATPase_OSCP/dsu"/>
</dbReference>
<dbReference type="NCBIfam" id="TIGR03321">
    <property type="entry name" value="alt_F1F0_F0_B"/>
    <property type="match status" value="1"/>
</dbReference>
<dbReference type="NCBIfam" id="TIGR01144">
    <property type="entry name" value="ATP_synt_b"/>
    <property type="match status" value="1"/>
</dbReference>
<dbReference type="PANTHER" id="PTHR33445">
    <property type="entry name" value="ATP SYNTHASE SUBUNIT B', CHLOROPLASTIC"/>
    <property type="match status" value="1"/>
</dbReference>
<dbReference type="PANTHER" id="PTHR33445:SF2">
    <property type="entry name" value="ATP SYNTHASE SUBUNIT B', CHLOROPLASTIC"/>
    <property type="match status" value="1"/>
</dbReference>
<dbReference type="Pfam" id="PF00430">
    <property type="entry name" value="ATP-synt_B"/>
    <property type="match status" value="1"/>
</dbReference>
<dbReference type="Pfam" id="PF00213">
    <property type="entry name" value="OSCP"/>
    <property type="match status" value="1"/>
</dbReference>
<evidence type="ECO:0000250" key="1"/>
<evidence type="ECO:0000255" key="2">
    <source>
        <dbReference type="HAMAP-Rule" id="MF_01398"/>
    </source>
</evidence>
<evidence type="ECO:0000256" key="3">
    <source>
        <dbReference type="SAM" id="MobiDB-lite"/>
    </source>
</evidence>
<sequence>MLFDWFTFWAQLLNFLILVWLLKRFLYRPVLEAIDEREKKISGELRDADEGRKQAEQAIREWQEKMSRLDAQAAGMLETARKEAGEEKKRLQGEARREYDELRGRLRESLHEEQAALGRTIAGRIRAEVFRVSDSVLNSLADSGLQAQMARAFSGRLSEGGTEVEELLKSGGTPLVLRSGFEMGEEEKELVRKTLADRFGYKGRLDFMTEESYRGGIALEQGGRSIEWSVNSRLEAIDEASSALLDGPDDEMNEEEGHAGKDAD</sequence>
<proteinExistence type="inferred from homology"/>
<name>ATPF1_CHLL3</name>
<feature type="chain" id="PRO_0000368650" description="ATP synthase subunit b 1">
    <location>
        <begin position="1"/>
        <end position="264"/>
    </location>
</feature>
<feature type="transmembrane region" description="Helical" evidence="2">
    <location>
        <begin position="2"/>
        <end position="22"/>
    </location>
</feature>
<feature type="region of interest" description="Disordered" evidence="3">
    <location>
        <begin position="240"/>
        <end position="264"/>
    </location>
</feature>
<feature type="compositionally biased region" description="Basic and acidic residues" evidence="3">
    <location>
        <begin position="255"/>
        <end position="264"/>
    </location>
</feature>
<keyword id="KW-0066">ATP synthesis</keyword>
<keyword id="KW-0997">Cell inner membrane</keyword>
<keyword id="KW-1003">Cell membrane</keyword>
<keyword id="KW-0138">CF(0)</keyword>
<keyword id="KW-0375">Hydrogen ion transport</keyword>
<keyword id="KW-0406">Ion transport</keyword>
<keyword id="KW-0472">Membrane</keyword>
<keyword id="KW-1185">Reference proteome</keyword>
<keyword id="KW-0812">Transmembrane</keyword>
<keyword id="KW-1133">Transmembrane helix</keyword>
<keyword id="KW-0813">Transport</keyword>
<accession>Q3B400</accession>
<comment type="function">
    <text evidence="2">F(1)F(0) ATP synthase produces ATP from ADP in the presence of a proton or sodium gradient. F-type ATPases consist of two structural domains, F(1) containing the extramembraneous catalytic core and F(0) containing the membrane proton channel, linked together by a central stalk and a peripheral stalk. During catalysis, ATP synthesis in the catalytic domain of F(1) is coupled via a rotary mechanism of the central stalk subunits to proton translocation.</text>
</comment>
<comment type="function">
    <text evidence="2">Component of the F(0) channel, it forms part of the peripheral stalk, linking F(1) to F(0).</text>
</comment>
<comment type="subunit">
    <text evidence="1">F-type ATPases have 2 components, F(1) - the catalytic core - and F(0) - the membrane proton channel. F(1) has five subunits: alpha(3), beta(3), gamma(1), delta(1), epsilon(1). F(0) has four main subunits: a(1), b(2) and c(10-14). The alpha and beta chains form an alternating ring which encloses part of the gamma chain. F(1) is attached to F(0) by a central stalk formed by the gamma and epsilon chains, while a peripheral stalk is formed by the delta and b chains (By similarity).</text>
</comment>
<comment type="subcellular location">
    <subcellularLocation>
        <location evidence="2">Cell inner membrane</location>
        <topology evidence="2">Single-pass membrane protein</topology>
    </subcellularLocation>
</comment>
<comment type="similarity">
    <text evidence="2">Belongs to the ATPase B chain family.</text>
</comment>
<protein>
    <recommendedName>
        <fullName evidence="2">ATP synthase subunit b 1</fullName>
    </recommendedName>
    <alternativeName>
        <fullName evidence="2">ATP synthase F(0) sector subunit b 1</fullName>
    </alternativeName>
    <alternativeName>
        <fullName evidence="2">ATPase subunit I 1</fullName>
    </alternativeName>
    <alternativeName>
        <fullName evidence="2">F-type ATPase subunit b 1</fullName>
        <shortName evidence="2">F-ATPase subunit b 1</shortName>
    </alternativeName>
</protein>